<proteinExistence type="inferred from homology"/>
<organism>
    <name type="scientific">Burkholderia pseudomallei (strain 1710b)</name>
    <dbReference type="NCBI Taxonomy" id="320372"/>
    <lineage>
        <taxon>Bacteria</taxon>
        <taxon>Pseudomonadati</taxon>
        <taxon>Pseudomonadota</taxon>
        <taxon>Betaproteobacteria</taxon>
        <taxon>Burkholderiales</taxon>
        <taxon>Burkholderiaceae</taxon>
        <taxon>Burkholderia</taxon>
        <taxon>pseudomallei group</taxon>
    </lineage>
</organism>
<reference key="1">
    <citation type="journal article" date="2010" name="Genome Biol. Evol.">
        <title>Continuing evolution of Burkholderia mallei through genome reduction and large-scale rearrangements.</title>
        <authorList>
            <person name="Losada L."/>
            <person name="Ronning C.M."/>
            <person name="DeShazer D."/>
            <person name="Woods D."/>
            <person name="Fedorova N."/>
            <person name="Kim H.S."/>
            <person name="Shabalina S.A."/>
            <person name="Pearson T.R."/>
            <person name="Brinkac L."/>
            <person name="Tan P."/>
            <person name="Nandi T."/>
            <person name="Crabtree J."/>
            <person name="Badger J."/>
            <person name="Beckstrom-Sternberg S."/>
            <person name="Saqib M."/>
            <person name="Schutzer S.E."/>
            <person name="Keim P."/>
            <person name="Nierman W.C."/>
        </authorList>
    </citation>
    <scope>NUCLEOTIDE SEQUENCE [LARGE SCALE GENOMIC DNA]</scope>
    <source>
        <strain>1710b</strain>
    </source>
</reference>
<protein>
    <recommendedName>
        <fullName evidence="1">Chaperone protein DnaK</fullName>
    </recommendedName>
    <alternativeName>
        <fullName evidence="1">HSP70</fullName>
    </alternativeName>
    <alternativeName>
        <fullName evidence="1">Heat shock 70 kDa protein</fullName>
    </alternativeName>
    <alternativeName>
        <fullName evidence="1">Heat shock protein 70</fullName>
    </alternativeName>
</protein>
<feature type="chain" id="PRO_0000225945" description="Chaperone protein DnaK">
    <location>
        <begin position="1"/>
        <end position="650"/>
    </location>
</feature>
<feature type="region of interest" description="Disordered" evidence="2">
    <location>
        <begin position="611"/>
        <end position="650"/>
    </location>
</feature>
<feature type="compositionally biased region" description="Low complexity" evidence="2">
    <location>
        <begin position="611"/>
        <end position="634"/>
    </location>
</feature>
<feature type="modified residue" description="Phosphothreonine; by autocatalysis" evidence="1">
    <location>
        <position position="200"/>
    </location>
</feature>
<keyword id="KW-0067">ATP-binding</keyword>
<keyword id="KW-0143">Chaperone</keyword>
<keyword id="KW-0547">Nucleotide-binding</keyword>
<keyword id="KW-0597">Phosphoprotein</keyword>
<keyword id="KW-0346">Stress response</keyword>
<comment type="function">
    <text evidence="1">Acts as a chaperone.</text>
</comment>
<comment type="induction">
    <text evidence="1">By stress conditions e.g. heat shock.</text>
</comment>
<comment type="similarity">
    <text evidence="1">Belongs to the heat shock protein 70 family.</text>
</comment>
<evidence type="ECO:0000255" key="1">
    <source>
        <dbReference type="HAMAP-Rule" id="MF_00332"/>
    </source>
</evidence>
<evidence type="ECO:0000256" key="2">
    <source>
        <dbReference type="SAM" id="MobiDB-lite"/>
    </source>
</evidence>
<dbReference type="EMBL" id="CP000124">
    <property type="protein sequence ID" value="ABA47623.1"/>
    <property type="molecule type" value="Genomic_DNA"/>
</dbReference>
<dbReference type="RefSeq" id="WP_004527678.1">
    <property type="nucleotide sequence ID" value="NC_007434.1"/>
</dbReference>
<dbReference type="SMR" id="Q3JP10"/>
<dbReference type="EnsemblBacteria" id="ABA47623">
    <property type="protein sequence ID" value="ABA47623"/>
    <property type="gene ID" value="BURPS1710b_3322"/>
</dbReference>
<dbReference type="KEGG" id="bpm:BURPS1710b_3322"/>
<dbReference type="HOGENOM" id="CLU_005965_2_1_4"/>
<dbReference type="Proteomes" id="UP000002700">
    <property type="component" value="Chromosome I"/>
</dbReference>
<dbReference type="GO" id="GO:0005524">
    <property type="term" value="F:ATP binding"/>
    <property type="evidence" value="ECO:0007669"/>
    <property type="project" value="UniProtKB-UniRule"/>
</dbReference>
<dbReference type="GO" id="GO:0140662">
    <property type="term" value="F:ATP-dependent protein folding chaperone"/>
    <property type="evidence" value="ECO:0007669"/>
    <property type="project" value="InterPro"/>
</dbReference>
<dbReference type="GO" id="GO:0051082">
    <property type="term" value="F:unfolded protein binding"/>
    <property type="evidence" value="ECO:0007669"/>
    <property type="project" value="InterPro"/>
</dbReference>
<dbReference type="CDD" id="cd10234">
    <property type="entry name" value="ASKHA_NBD_HSP70_DnaK-like"/>
    <property type="match status" value="1"/>
</dbReference>
<dbReference type="FunFam" id="2.60.34.10:FF:000014">
    <property type="entry name" value="Chaperone protein DnaK HSP70"/>
    <property type="match status" value="1"/>
</dbReference>
<dbReference type="FunFam" id="3.30.30.30:FF:000003">
    <property type="entry name" value="Heat shock protein 9"/>
    <property type="match status" value="1"/>
</dbReference>
<dbReference type="FunFam" id="1.20.1270.10:FF:000001">
    <property type="entry name" value="Molecular chaperone DnaK"/>
    <property type="match status" value="1"/>
</dbReference>
<dbReference type="FunFam" id="3.30.420.40:FF:000004">
    <property type="entry name" value="Molecular chaperone DnaK"/>
    <property type="match status" value="1"/>
</dbReference>
<dbReference type="FunFam" id="3.90.640.10:FF:000003">
    <property type="entry name" value="Molecular chaperone DnaK"/>
    <property type="match status" value="1"/>
</dbReference>
<dbReference type="Gene3D" id="1.20.1270.10">
    <property type="match status" value="1"/>
</dbReference>
<dbReference type="Gene3D" id="3.30.420.40">
    <property type="match status" value="2"/>
</dbReference>
<dbReference type="Gene3D" id="3.90.640.10">
    <property type="entry name" value="Actin, Chain A, domain 4"/>
    <property type="match status" value="1"/>
</dbReference>
<dbReference type="Gene3D" id="2.60.34.10">
    <property type="entry name" value="Substrate Binding Domain Of DNAk, Chain A, domain 1"/>
    <property type="match status" value="1"/>
</dbReference>
<dbReference type="HAMAP" id="MF_00332">
    <property type="entry name" value="DnaK"/>
    <property type="match status" value="1"/>
</dbReference>
<dbReference type="InterPro" id="IPR043129">
    <property type="entry name" value="ATPase_NBD"/>
</dbReference>
<dbReference type="InterPro" id="IPR012725">
    <property type="entry name" value="Chaperone_DnaK"/>
</dbReference>
<dbReference type="InterPro" id="IPR018181">
    <property type="entry name" value="Heat_shock_70_CS"/>
</dbReference>
<dbReference type="InterPro" id="IPR029048">
    <property type="entry name" value="HSP70_C_sf"/>
</dbReference>
<dbReference type="InterPro" id="IPR029047">
    <property type="entry name" value="HSP70_peptide-bd_sf"/>
</dbReference>
<dbReference type="InterPro" id="IPR013126">
    <property type="entry name" value="Hsp_70_fam"/>
</dbReference>
<dbReference type="NCBIfam" id="NF001413">
    <property type="entry name" value="PRK00290.1"/>
    <property type="match status" value="1"/>
</dbReference>
<dbReference type="NCBIfam" id="NF003520">
    <property type="entry name" value="PRK05183.1"/>
    <property type="match status" value="1"/>
</dbReference>
<dbReference type="NCBIfam" id="TIGR02350">
    <property type="entry name" value="prok_dnaK"/>
    <property type="match status" value="1"/>
</dbReference>
<dbReference type="PANTHER" id="PTHR19375">
    <property type="entry name" value="HEAT SHOCK PROTEIN 70KDA"/>
    <property type="match status" value="1"/>
</dbReference>
<dbReference type="Pfam" id="PF00012">
    <property type="entry name" value="HSP70"/>
    <property type="match status" value="1"/>
</dbReference>
<dbReference type="PRINTS" id="PR00301">
    <property type="entry name" value="HEATSHOCK70"/>
</dbReference>
<dbReference type="SUPFAM" id="SSF53067">
    <property type="entry name" value="Actin-like ATPase domain"/>
    <property type="match status" value="2"/>
</dbReference>
<dbReference type="SUPFAM" id="SSF100934">
    <property type="entry name" value="Heat shock protein 70kD (HSP70), C-terminal subdomain"/>
    <property type="match status" value="1"/>
</dbReference>
<dbReference type="SUPFAM" id="SSF100920">
    <property type="entry name" value="Heat shock protein 70kD (HSP70), peptide-binding domain"/>
    <property type="match status" value="1"/>
</dbReference>
<dbReference type="PROSITE" id="PS00297">
    <property type="entry name" value="HSP70_1"/>
    <property type="match status" value="1"/>
</dbReference>
<dbReference type="PROSITE" id="PS00329">
    <property type="entry name" value="HSP70_2"/>
    <property type="match status" value="1"/>
</dbReference>
<dbReference type="PROSITE" id="PS01036">
    <property type="entry name" value="HSP70_3"/>
    <property type="match status" value="1"/>
</dbReference>
<accession>Q3JP10</accession>
<name>DNAK_BURP1</name>
<sequence length="650" mass="69728">MGKIIGIDLGTTNSCVAIMEGNQVKVIENSEGARTTPSIIAYMDDNEVLVGAPAKRQSVTNPKNTLFAVKRLIGRRFEEKEVQKDIGLMPYAIIKADNGDAWVEAHGEKLAPPQVSAEVLRKMKKTAEDYLGEPVTEAVITVPAYFNDSQRQATKDAGRIAGLEVKRIINEPTAAALAFGLDKAEKGDRKIAVYDLGGGTFDVSIIEIADVDGEMQFEVLSTNGDTFLGGEDFDQRIIDYIIGEFKKEQGVDLSKDVLALQRLKEAAEKAKIELSSSQQTEINLPYITADASGPKHLNLKVTRAKLEALVEDLVERTIEPCRTAIKDAGVKVSDIDDVILVGGQTRMPKVQEKVKEFFGKEPRRDVNPDEAVAVGAAIQGQVLSGDRKDVLLLDVTPLSLGIETLGGVMTKMINKNTTIPTKHAQVYSTADDNQGAVTIKVFQGEREMAAGNKLLGEFNLEGIPPAPRGVPQIEVTFDIDANGILHVGAKDKATGKENKITIKANSGLSEAEIEKMVKDAEANAAEDHKLRELAESRNQGDALVHSTKKALTEYGDKLEAGEKEKIEAALKELEDVLKNASSDKAAIDAKVEAVATASQKLGEKMYADMQAQQAGAAGAAGAAAEGASAQGGAQPPDDVVDADFKEVKKD</sequence>
<gene>
    <name evidence="1" type="primary">dnaK</name>
    <name type="ordered locus">BURPS1710b_3322</name>
</gene>